<protein>
    <recommendedName>
        <fullName evidence="1">Transcriptional repressor NrdR</fullName>
    </recommendedName>
</protein>
<gene>
    <name evidence="1" type="primary">nrdR</name>
    <name type="ordered locus">CTA_0441</name>
</gene>
<comment type="function">
    <text evidence="1">Negatively regulates transcription of bacterial ribonucleotide reductase nrd genes and operons by binding to NrdR-boxes.</text>
</comment>
<comment type="cofactor">
    <cofactor evidence="1">
        <name>Zn(2+)</name>
        <dbReference type="ChEBI" id="CHEBI:29105"/>
    </cofactor>
    <text evidence="1">Binds 1 zinc ion.</text>
</comment>
<comment type="similarity">
    <text evidence="1">Belongs to the NrdR family.</text>
</comment>
<dbReference type="EMBL" id="CP000051">
    <property type="protein sequence ID" value="AAX50675.1"/>
    <property type="molecule type" value="Genomic_DNA"/>
</dbReference>
<dbReference type="RefSeq" id="WP_009871758.1">
    <property type="nucleotide sequence ID" value="NC_007429.1"/>
</dbReference>
<dbReference type="SMR" id="Q3KLU7"/>
<dbReference type="KEGG" id="cta:CTA_0441"/>
<dbReference type="HOGENOM" id="CLU_108412_0_0_0"/>
<dbReference type="Proteomes" id="UP000002532">
    <property type="component" value="Chromosome"/>
</dbReference>
<dbReference type="GO" id="GO:0005524">
    <property type="term" value="F:ATP binding"/>
    <property type="evidence" value="ECO:0007669"/>
    <property type="project" value="UniProtKB-KW"/>
</dbReference>
<dbReference type="GO" id="GO:0003677">
    <property type="term" value="F:DNA binding"/>
    <property type="evidence" value="ECO:0007669"/>
    <property type="project" value="UniProtKB-KW"/>
</dbReference>
<dbReference type="GO" id="GO:0008270">
    <property type="term" value="F:zinc ion binding"/>
    <property type="evidence" value="ECO:0007669"/>
    <property type="project" value="UniProtKB-UniRule"/>
</dbReference>
<dbReference type="GO" id="GO:0045892">
    <property type="term" value="P:negative regulation of DNA-templated transcription"/>
    <property type="evidence" value="ECO:0007669"/>
    <property type="project" value="UniProtKB-UniRule"/>
</dbReference>
<dbReference type="HAMAP" id="MF_00440">
    <property type="entry name" value="NrdR"/>
    <property type="match status" value="1"/>
</dbReference>
<dbReference type="InterPro" id="IPR005144">
    <property type="entry name" value="ATP-cone_dom"/>
</dbReference>
<dbReference type="InterPro" id="IPR055173">
    <property type="entry name" value="NrdR-like_N"/>
</dbReference>
<dbReference type="InterPro" id="IPR003796">
    <property type="entry name" value="RNR_NrdR-like"/>
</dbReference>
<dbReference type="NCBIfam" id="TIGR00244">
    <property type="entry name" value="transcriptional regulator NrdR"/>
    <property type="match status" value="1"/>
</dbReference>
<dbReference type="PANTHER" id="PTHR30455">
    <property type="entry name" value="TRANSCRIPTIONAL REPRESSOR NRDR"/>
    <property type="match status" value="1"/>
</dbReference>
<dbReference type="PANTHER" id="PTHR30455:SF2">
    <property type="entry name" value="TRANSCRIPTIONAL REPRESSOR NRDR"/>
    <property type="match status" value="1"/>
</dbReference>
<dbReference type="Pfam" id="PF03477">
    <property type="entry name" value="ATP-cone"/>
    <property type="match status" value="1"/>
</dbReference>
<dbReference type="Pfam" id="PF22811">
    <property type="entry name" value="Zn_ribbon_NrdR"/>
    <property type="match status" value="1"/>
</dbReference>
<dbReference type="PROSITE" id="PS51161">
    <property type="entry name" value="ATP_CONE"/>
    <property type="match status" value="1"/>
</dbReference>
<sequence length="154" mass="17660">MLCPFCNHGELKVIDSRNAPESNAIKRRRECLRCSQRFTTFETVELTVQVLKRDGRYENFQESKLVNGLKAASSHTRIGQEQVQAIASNIKQDLLGKQNREISTKEIGELVMKYLKKADMIAYIRFACVYRRFKDVGELMEVLLSATPDGEKQT</sequence>
<accession>Q3KLU7</accession>
<proteinExistence type="inferred from homology"/>
<keyword id="KW-0067">ATP-binding</keyword>
<keyword id="KW-0238">DNA-binding</keyword>
<keyword id="KW-0479">Metal-binding</keyword>
<keyword id="KW-0547">Nucleotide-binding</keyword>
<keyword id="KW-0678">Repressor</keyword>
<keyword id="KW-0804">Transcription</keyword>
<keyword id="KW-0805">Transcription regulation</keyword>
<keyword id="KW-0862">Zinc</keyword>
<keyword id="KW-0863">Zinc-finger</keyword>
<organism>
    <name type="scientific">Chlamydia trachomatis serovar A (strain ATCC VR-571B / DSM 19440 / HAR-13)</name>
    <dbReference type="NCBI Taxonomy" id="315277"/>
    <lineage>
        <taxon>Bacteria</taxon>
        <taxon>Pseudomonadati</taxon>
        <taxon>Chlamydiota</taxon>
        <taxon>Chlamydiia</taxon>
        <taxon>Chlamydiales</taxon>
        <taxon>Chlamydiaceae</taxon>
        <taxon>Chlamydia/Chlamydophila group</taxon>
        <taxon>Chlamydia</taxon>
    </lineage>
</organism>
<reference key="1">
    <citation type="journal article" date="2005" name="Infect. Immun.">
        <title>Comparative genomic analysis of Chlamydia trachomatis oculotropic and genitotropic strains.</title>
        <authorList>
            <person name="Carlson J.H."/>
            <person name="Porcella S.F."/>
            <person name="McClarty G."/>
            <person name="Caldwell H.D."/>
        </authorList>
    </citation>
    <scope>NUCLEOTIDE SEQUENCE [LARGE SCALE GENOMIC DNA]</scope>
    <source>
        <strain>ATCC VR-571B / DSM 19440 / HAR-13</strain>
    </source>
</reference>
<feature type="chain" id="PRO_0000230861" description="Transcriptional repressor NrdR">
    <location>
        <begin position="1"/>
        <end position="154"/>
    </location>
</feature>
<feature type="domain" description="ATP-cone" evidence="1">
    <location>
        <begin position="48"/>
        <end position="138"/>
    </location>
</feature>
<feature type="zinc finger region" evidence="1">
    <location>
        <begin position="3"/>
        <end position="34"/>
    </location>
</feature>
<evidence type="ECO:0000255" key="1">
    <source>
        <dbReference type="HAMAP-Rule" id="MF_00440"/>
    </source>
</evidence>
<name>NRDR_CHLTA</name>